<organism>
    <name type="scientific">Mus musculus</name>
    <name type="common">Mouse</name>
    <dbReference type="NCBI Taxonomy" id="10090"/>
    <lineage>
        <taxon>Eukaryota</taxon>
        <taxon>Metazoa</taxon>
        <taxon>Chordata</taxon>
        <taxon>Craniata</taxon>
        <taxon>Vertebrata</taxon>
        <taxon>Euteleostomi</taxon>
        <taxon>Mammalia</taxon>
        <taxon>Eutheria</taxon>
        <taxon>Euarchontoglires</taxon>
        <taxon>Glires</taxon>
        <taxon>Rodentia</taxon>
        <taxon>Myomorpha</taxon>
        <taxon>Muroidea</taxon>
        <taxon>Muridae</taxon>
        <taxon>Murinae</taxon>
        <taxon>Mus</taxon>
        <taxon>Mus</taxon>
    </lineage>
</organism>
<protein>
    <recommendedName>
        <fullName>Protein enabled homolog</fullName>
    </recommendedName>
    <alternativeName>
        <fullName>NPC-derived proline-rich protein 1</fullName>
        <shortName>NDPP-1</shortName>
    </alternativeName>
</protein>
<feature type="chain" id="PRO_0000086972" description="Protein enabled homolog">
    <location>
        <begin position="1"/>
        <end position="802"/>
    </location>
</feature>
<feature type="domain" description="WH1" evidence="4">
    <location>
        <begin position="1"/>
        <end position="111"/>
    </location>
</feature>
<feature type="repeat" description="1">
    <location>
        <begin position="175"/>
        <end position="179"/>
    </location>
</feature>
<feature type="repeat" description="2">
    <location>
        <begin position="180"/>
        <end position="184"/>
    </location>
</feature>
<feature type="repeat" description="3">
    <location>
        <begin position="185"/>
        <end position="189"/>
    </location>
</feature>
<feature type="repeat" description="4">
    <location>
        <begin position="190"/>
        <end position="194"/>
    </location>
</feature>
<feature type="repeat" description="5">
    <location>
        <begin position="195"/>
        <end position="199"/>
    </location>
</feature>
<feature type="repeat" description="6">
    <location>
        <begin position="200"/>
        <end position="204"/>
    </location>
</feature>
<feature type="repeat" description="7">
    <location>
        <begin position="205"/>
        <end position="209"/>
    </location>
</feature>
<feature type="region of interest" description="Disordered" evidence="5">
    <location>
        <begin position="143"/>
        <end position="166"/>
    </location>
</feature>
<feature type="region of interest" description="7 X 5 AA tandem repeats of [LM]-E-[QR]-[EQ]-[QR]">
    <location>
        <begin position="175"/>
        <end position="209"/>
    </location>
</feature>
<feature type="region of interest" description="Disordered" evidence="5">
    <location>
        <begin position="245"/>
        <end position="287"/>
    </location>
</feature>
<feature type="region of interest" description="Disordered" evidence="5">
    <location>
        <begin position="341"/>
        <end position="622"/>
    </location>
</feature>
<feature type="region of interest" description="EVH2">
    <location>
        <begin position="623"/>
        <end position="799"/>
    </location>
</feature>
<feature type="region of interest" description="EVH2 block A">
    <location>
        <begin position="623"/>
        <end position="643"/>
    </location>
</feature>
<feature type="region of interest" description="Disordered" evidence="5">
    <location>
        <begin position="639"/>
        <end position="675"/>
    </location>
</feature>
<feature type="region of interest" description="EVH2 block B">
    <location>
        <begin position="674"/>
        <end position="691"/>
    </location>
</feature>
<feature type="region of interest" description="Disordered" evidence="5">
    <location>
        <begin position="691"/>
        <end position="764"/>
    </location>
</feature>
<feature type="region of interest" description="EVH2 block C">
    <location>
        <begin position="765"/>
        <end position="799"/>
    </location>
</feature>
<feature type="coiled-coil region" evidence="3">
    <location>
        <begin position="154"/>
        <end position="258"/>
    </location>
</feature>
<feature type="coiled-coil region" evidence="3">
    <location>
        <begin position="767"/>
        <end position="797"/>
    </location>
</feature>
<feature type="short sequence motif" description="KLKR">
    <location>
        <begin position="632"/>
        <end position="635"/>
    </location>
</feature>
<feature type="compositionally biased region" description="Polar residues" evidence="5">
    <location>
        <begin position="143"/>
        <end position="155"/>
    </location>
</feature>
<feature type="compositionally biased region" description="Basic and acidic residues" evidence="5">
    <location>
        <begin position="245"/>
        <end position="254"/>
    </location>
</feature>
<feature type="compositionally biased region" description="Low complexity" evidence="5">
    <location>
        <begin position="255"/>
        <end position="278"/>
    </location>
</feature>
<feature type="compositionally biased region" description="Polar residues" evidence="5">
    <location>
        <begin position="348"/>
        <end position="361"/>
    </location>
</feature>
<feature type="compositionally biased region" description="Low complexity" evidence="5">
    <location>
        <begin position="386"/>
        <end position="410"/>
    </location>
</feature>
<feature type="compositionally biased region" description="Pro residues" evidence="5">
    <location>
        <begin position="431"/>
        <end position="464"/>
    </location>
</feature>
<feature type="compositionally biased region" description="Low complexity" evidence="5">
    <location>
        <begin position="485"/>
        <end position="505"/>
    </location>
</feature>
<feature type="compositionally biased region" description="Polar residues" evidence="5">
    <location>
        <begin position="525"/>
        <end position="535"/>
    </location>
</feature>
<feature type="compositionally biased region" description="Pro residues" evidence="5">
    <location>
        <begin position="542"/>
        <end position="553"/>
    </location>
</feature>
<feature type="compositionally biased region" description="Pro residues" evidence="5">
    <location>
        <begin position="561"/>
        <end position="605"/>
    </location>
</feature>
<feature type="compositionally biased region" description="Gly residues" evidence="5">
    <location>
        <begin position="664"/>
        <end position="675"/>
    </location>
</feature>
<feature type="compositionally biased region" description="Polar residues" evidence="5">
    <location>
        <begin position="731"/>
        <end position="760"/>
    </location>
</feature>
<feature type="modified residue" description="Phosphoserine" evidence="26">
    <location>
        <position position="144"/>
    </location>
</feature>
<feature type="modified residue" description="Phosphoserine; by PKA" evidence="13 27">
    <location>
        <position position="255"/>
    </location>
</feature>
<feature type="modified residue" description="Phosphoserine" evidence="27">
    <location>
        <position position="383"/>
    </location>
</feature>
<feature type="modified residue" description="Phosphotyrosine" evidence="9">
    <location>
        <position position="557"/>
    </location>
</feature>
<feature type="modified residue" description="Phosphoserine" evidence="2">
    <location>
        <position position="738"/>
    </location>
</feature>
<feature type="modified residue" description="Phosphoserine" evidence="2">
    <location>
        <position position="740"/>
    </location>
</feature>
<feature type="splice variant" id="VSP_007255" description="In isoform 1." evidence="19">
    <location>
        <begin position="1"/>
        <end position="412"/>
    </location>
</feature>
<feature type="splice variant" id="VSP_007259" description="In isoform 2, isoform 3 and isoform 6." evidence="20 21">
    <location>
        <begin position="117"/>
        <end position="135"/>
    </location>
</feature>
<feature type="splice variant" id="VSP_007257" description="In isoform 4." evidence="21">
    <location>
        <begin position="117"/>
        <end position="131"/>
    </location>
</feature>
<feature type="splice variant" id="VSP_007258" description="In isoform 4." evidence="21">
    <original>CIFC</original>
    <variation>VFYL</variation>
    <location>
        <begin position="132"/>
        <end position="135"/>
    </location>
</feature>
<feature type="splice variant" id="VSP_007260" description="In isoform 2 and isoform 6." evidence="20 21">
    <location>
        <begin position="259"/>
        <end position="500"/>
    </location>
</feature>
<feature type="splice variant" id="VSP_010565" description="In isoform 6." evidence="22">
    <location>
        <begin position="561"/>
        <end position="594"/>
    </location>
</feature>
<feature type="mutagenesis site" description="No change in subcellular location nor colocalization with vinculin at focal adhesions nor with N-WASP at the leading edge. Loss of cell mobility function; when associated with A-637." evidence="8">
    <original>S</original>
    <variation>A</variation>
    <location>
        <position position="255"/>
    </location>
</feature>
<feature type="mutagenesis site" description="No change in subcellular location nor colocalization with vinculin at focal adhesions nor with N-WASP at the leading edge. No loss of cell mobility function; when associated with D-637." evidence="8">
    <original>S</original>
    <variation>D</variation>
    <location>
        <position position="255"/>
    </location>
</feature>
<feature type="mutagenesis site" description="No change in subcellular location nor colocalization with vinculin at focal adhesions nor with N-WASP at the leading edge. No loss of cell mobility function. when associated with A-255." evidence="8">
    <original>S</original>
    <variation>A</variation>
    <location>
        <position position="637"/>
    </location>
</feature>
<feature type="mutagenesis site" description="No change in subcellular location nor colocalization with vinculin at focal adhesions nor with N-WASP at the leading edge. No loss of cell mobility function. when associated with D-255." evidence="8">
    <original>S</original>
    <variation>D</variation>
    <location>
        <position position="637"/>
    </location>
</feature>
<feature type="sequence conflict" description="In Ref. 1; BAA01570." evidence="22" ref="1">
    <original>G</original>
    <variation>A</variation>
    <location>
        <position position="500"/>
    </location>
</feature>
<feature type="strand" evidence="28">
    <location>
        <begin position="3"/>
        <end position="17"/>
    </location>
</feature>
<feature type="turn" evidence="28">
    <location>
        <begin position="18"/>
        <end position="21"/>
    </location>
</feature>
<feature type="strand" evidence="28">
    <location>
        <begin position="22"/>
        <end position="25"/>
    </location>
</feature>
<feature type="helix" evidence="28">
    <location>
        <begin position="26"/>
        <end position="28"/>
    </location>
</feature>
<feature type="strand" evidence="28">
    <location>
        <begin position="33"/>
        <end position="40"/>
    </location>
</feature>
<feature type="turn" evidence="28">
    <location>
        <begin position="41"/>
        <end position="44"/>
    </location>
</feature>
<feature type="strand" evidence="28">
    <location>
        <begin position="45"/>
        <end position="52"/>
    </location>
</feature>
<feature type="turn" evidence="28">
    <location>
        <begin position="53"/>
        <end position="55"/>
    </location>
</feature>
<feature type="strand" evidence="28">
    <location>
        <begin position="58"/>
        <end position="64"/>
    </location>
</feature>
<feature type="strand" evidence="28">
    <location>
        <begin position="74"/>
        <end position="81"/>
    </location>
</feature>
<feature type="strand" evidence="28">
    <location>
        <begin position="86"/>
        <end position="93"/>
    </location>
</feature>
<feature type="helix" evidence="28">
    <location>
        <begin position="94"/>
        <end position="111"/>
    </location>
</feature>
<evidence type="ECO:0000250" key="1"/>
<evidence type="ECO:0000250" key="2">
    <source>
        <dbReference type="UniProtKB" id="Q8N8S7"/>
    </source>
</evidence>
<evidence type="ECO:0000255" key="3"/>
<evidence type="ECO:0000255" key="4">
    <source>
        <dbReference type="PROSITE-ProRule" id="PRU00410"/>
    </source>
</evidence>
<evidence type="ECO:0000256" key="5">
    <source>
        <dbReference type="SAM" id="MobiDB-lite"/>
    </source>
</evidence>
<evidence type="ECO:0000269" key="6">
    <source>
    </source>
</evidence>
<evidence type="ECO:0000269" key="7">
    <source>
    </source>
</evidence>
<evidence type="ECO:0000269" key="8">
    <source>
    </source>
</evidence>
<evidence type="ECO:0000269" key="9">
    <source>
    </source>
</evidence>
<evidence type="ECO:0000269" key="10">
    <source>
    </source>
</evidence>
<evidence type="ECO:0000269" key="11">
    <source>
    </source>
</evidence>
<evidence type="ECO:0000269" key="12">
    <source>
    </source>
</evidence>
<evidence type="ECO:0000269" key="13">
    <source>
    </source>
</evidence>
<evidence type="ECO:0000269" key="14">
    <source>
    </source>
</evidence>
<evidence type="ECO:0000269" key="15">
    <source>
    </source>
</evidence>
<evidence type="ECO:0000269" key="16">
    <source>
    </source>
</evidence>
<evidence type="ECO:0000269" key="17">
    <source>
    </source>
</evidence>
<evidence type="ECO:0000269" key="18">
    <source>
    </source>
</evidence>
<evidence type="ECO:0000303" key="19">
    <source>
    </source>
</evidence>
<evidence type="ECO:0000303" key="20">
    <source>
    </source>
</evidence>
<evidence type="ECO:0000303" key="21">
    <source>
    </source>
</evidence>
<evidence type="ECO:0000305" key="22"/>
<evidence type="ECO:0000305" key="23">
    <source>
    </source>
</evidence>
<evidence type="ECO:0007744" key="24">
    <source>
        <dbReference type="PDB" id="1EVH"/>
    </source>
</evidence>
<evidence type="ECO:0007744" key="25">
    <source>
        <dbReference type="PDB" id="4CC3"/>
    </source>
</evidence>
<evidence type="ECO:0007744" key="26">
    <source>
    </source>
</evidence>
<evidence type="ECO:0007744" key="27">
    <source>
    </source>
</evidence>
<evidence type="ECO:0007829" key="28">
    <source>
        <dbReference type="PDB" id="1EVH"/>
    </source>
</evidence>
<gene>
    <name type="primary">Enah</name>
    <name type="synonym">Mena</name>
    <name type="synonym">Ndpp1</name>
</gene>
<name>ENAH_MOUSE</name>
<reference key="1">
    <citation type="journal article" date="1992" name="Biochim. Biophys. Acta">
        <title>Identification of a developmentally regulated gene in the mouse central nervous system which encodes a novel proline rich protein.</title>
        <authorList>
            <person name="Sazuka T."/>
            <person name="Tomooka Y."/>
            <person name="Kathju S."/>
            <person name="Ikawa Y."/>
            <person name="Noda M."/>
            <person name="Kumar S."/>
        </authorList>
    </citation>
    <scope>NUCLEOTIDE SEQUENCE [MRNA] (ISOFORM 1)</scope>
    <scope>TISSUE SPECIFICITY</scope>
    <source>
        <tissue>Brain</tissue>
    </source>
</reference>
<reference key="2">
    <citation type="journal article" date="1996" name="Cell">
        <title>Mena, a relative of VASP and Drosophila Enabled, is implicated in the control of microfilament dynamics.</title>
        <authorList>
            <person name="Gertler F.B."/>
            <person name="Niebuhr K."/>
            <person name="Reinhard M."/>
            <person name="Wehland J."/>
            <person name="Soriano P."/>
        </authorList>
    </citation>
    <scope>NUCLEOTIDE SEQUENCE [MRNA] (ISOFORMS 2; 3; 4 AND 5)</scope>
    <scope>FUNCTION</scope>
    <scope>TISSUE SPECIFICITY</scope>
    <scope>SUBCELLULAR LOCATION</scope>
    <scope>ROLE IN L.MONOCYTOGENES MOBILITY</scope>
    <scope>MISCELLANEOUS</scope>
    <scope>INTERACTION WITH PFN1</scope>
    <source>
        <tissue>Brain</tissue>
    </source>
</reference>
<reference key="3">
    <citation type="journal article" date="2004" name="Genome Res.">
        <title>The status, quality, and expansion of the NIH full-length cDNA project: the Mammalian Gene Collection (MGC).</title>
        <authorList>
            <consortium name="The MGC Project Team"/>
        </authorList>
    </citation>
    <scope>NUCLEOTIDE SEQUENCE [LARGE SCALE MRNA] (ISOFORM 2)</scope>
    <source>
        <strain>C57BL/6J</strain>
        <tissue>Brain</tissue>
    </source>
</reference>
<reference key="4">
    <citation type="journal article" date="1997" name="EMBO J.">
        <title>FBP WW domains and the Abl SH3 domain bind to a specific class of proline-rich ligands.</title>
        <authorList>
            <person name="Bedford M.T."/>
            <person name="Chan D.C."/>
            <person name="Leder P."/>
        </authorList>
    </citation>
    <scope>INTERACTION WITH PRPF40A</scope>
</reference>
<reference key="5">
    <citation type="journal article" date="1997" name="J. Biol. Chem.">
        <title>The WW domain of neural protein FE65 interacts with proline-rich motifs in Mena, the mammalian homolog of Drosophila enabled.</title>
        <authorList>
            <person name="Ermekova K.S."/>
            <person name="Zambrano N."/>
            <person name="Linn H."/>
            <person name="Minopoli G."/>
            <person name="Gertler F."/>
            <person name="Russo T."/>
            <person name="Sudol M."/>
        </authorList>
    </citation>
    <scope>INTERACTION WITH APBB1; NEDD4 AND YAP1</scope>
</reference>
<reference key="6">
    <citation type="journal article" date="1999" name="Neuron">
        <title>Mena is required for neurulation and commissure formation.</title>
        <authorList>
            <person name="Lanier L.M."/>
            <person name="Gates M.A."/>
            <person name="Witke W."/>
            <person name="Menzies A.S."/>
            <person name="Wehman A.M."/>
            <person name="Macklis J.D."/>
            <person name="Kwiatkowski D."/>
            <person name="Soriano P."/>
            <person name="Gertler F.B."/>
        </authorList>
    </citation>
    <scope>FUNCTION</scope>
    <scope>SUBCELLULAR LOCATION</scope>
    <scope>TISSUE SPECIFICITY</scope>
    <scope>DEVELOPMENTAL STAGE</scope>
    <scope>DISRUPTION PHENOTYPE</scope>
</reference>
<reference key="7">
    <citation type="journal article" date="2002" name="Mol. Biol. Cell">
        <title>Critical roles of phosphorylation and actin binding motifs, but not the central proline-rich region, for Ena/vasodilator-stimulated phosphoprotein (VASP) function during cell migration.</title>
        <authorList>
            <person name="Loureiro J.J."/>
            <person name="Rubinson D.A."/>
            <person name="Bear J.E."/>
            <person name="Baltus G.A."/>
            <person name="Kwiatkowski A.V."/>
            <person name="Gertler F.B."/>
        </authorList>
    </citation>
    <scope>FUNCTION</scope>
    <scope>SUBCELLULAR LOCATION</scope>
    <scope>MUTAGENESIS OF SER-255 AND SER-637</scope>
</reference>
<reference key="8">
    <citation type="journal article" date="2003" name="Dev. Biol.">
        <title>Robo4 is a vascular-specific receptor that inhibits endothelial migration.</title>
        <authorList>
            <person name="Park K.W."/>
            <person name="Morrison C.M."/>
            <person name="Sorensen L.K."/>
            <person name="Jones C.A."/>
            <person name="Rao Y."/>
            <person name="Chien C.-B."/>
            <person name="Wu J.Y."/>
            <person name="Urness L.D."/>
            <person name="Li D.Y."/>
        </authorList>
    </citation>
    <scope>INTERACTION WITH ROBO4</scope>
    <source>
        <strain>FVB/N</strain>
    </source>
</reference>
<reference key="9">
    <citation type="journal article" date="2003" name="J. Biol. Chem.">
        <title>Abl interactor 1 promotes tyrosine 296 phosphorylation of mammalian enabled (Mena) by c-Abl kinase.</title>
        <authorList>
            <person name="Tani K."/>
            <person name="Sato S."/>
            <person name="Sukezane T."/>
            <person name="Kojima H."/>
            <person name="Hirose H."/>
            <person name="Hanafusa H."/>
            <person name="Shishido T."/>
        </authorList>
    </citation>
    <scope>ALTERNATIVE SPLICING (ISOFORM 6)</scope>
    <scope>PHOSPHORYLATION AT TYR-557</scope>
    <scope>INTERACTION WITH ABI1</scope>
</reference>
<reference key="10">
    <citation type="journal article" date="2003" name="J. Biol. Chem.">
        <title>Tuba, a novel protein containing bin/amphiphysin/Rvs and Dbl homology domains, links dynamin to regulation of the actin cytoskeleton.</title>
        <authorList>
            <person name="Salazar M.A."/>
            <person name="Kwiatkowski A.V."/>
            <person name="Pellegrini L."/>
            <person name="Cestra G."/>
            <person name="Butler M.H."/>
            <person name="Rossman K.L."/>
            <person name="Serna D.M."/>
            <person name="Sondek J."/>
            <person name="Gertler F.B."/>
            <person name="De Camilli P."/>
        </authorList>
    </citation>
    <scope>INTERACTION WITH DNMBP</scope>
</reference>
<reference key="11">
    <citation type="journal article" date="2004" name="J. Cell Biol.">
        <title>Mammalian Fat1 cadherin regulates actin dynamics and cell-cell contact.</title>
        <authorList>
            <person name="Tanoue T."/>
            <person name="Takeichi M."/>
        </authorList>
    </citation>
    <scope>INTERACTION WITH FAT1</scope>
</reference>
<reference key="12">
    <citation type="journal article" date="2004" name="Mol. Cell. Proteomics">
        <title>Phosphoproteomic analysis of the developing mouse brain.</title>
        <authorList>
            <person name="Ballif B.A."/>
            <person name="Villen J."/>
            <person name="Beausoleil S.A."/>
            <person name="Schwartz D."/>
            <person name="Gygi S.P."/>
        </authorList>
    </citation>
    <scope>PHOSPHORYLATION [LARGE SCALE ANALYSIS] AT SER-144</scope>
    <scope>IDENTIFICATION BY MASS SPECTROMETRY [LARGE SCALE ANALYSIS]</scope>
    <source>
        <tissue>Embryonic brain</tissue>
    </source>
</reference>
<reference key="13">
    <citation type="journal article" date="2004" name="Neuron">
        <title>Critical role of Ena/VASP proteins for filopodia formation in neurons and in function downstream of netrin-1.</title>
        <authorList>
            <person name="Lebrand C."/>
            <person name="Dent E.W."/>
            <person name="Strasser G.A."/>
            <person name="Lanier L.M."/>
            <person name="Krause M."/>
            <person name="Svitkina T.M."/>
            <person name="Borisy G.G."/>
            <person name="Gertler F.B."/>
        </authorList>
    </citation>
    <scope>FUNCTION</scope>
    <scope>PHOSPHORYLATION AT SER-255</scope>
</reference>
<reference key="14">
    <citation type="journal article" date="2005" name="FEBS Lett.">
        <title>PREL1 provides a link from Ras signalling to the actin cytoskeleton via Ena/VASP proteins.</title>
        <authorList>
            <person name="Jenzora A."/>
            <person name="Behrendt B."/>
            <person name="Small J.V."/>
            <person name="Wehland J."/>
            <person name="Stradal T.E."/>
        </authorList>
    </citation>
    <scope>INTERACTION WITH APBB1IP</scope>
</reference>
<reference key="15">
    <citation type="journal article" date="2010" name="Cell">
        <title>A tissue-specific atlas of mouse protein phosphorylation and expression.</title>
        <authorList>
            <person name="Huttlin E.L."/>
            <person name="Jedrychowski M.P."/>
            <person name="Elias J.E."/>
            <person name="Goswami T."/>
            <person name="Rad R."/>
            <person name="Beausoleil S.A."/>
            <person name="Villen J."/>
            <person name="Haas W."/>
            <person name="Sowa M.E."/>
            <person name="Gygi S.P."/>
        </authorList>
    </citation>
    <scope>PHOSPHORYLATION [LARGE SCALE ANALYSIS] AT SER-255 AND SER-383</scope>
    <scope>IDENTIFICATION BY MASS SPECTROMETRY [LARGE SCALE ANALYSIS]</scope>
    <source>
        <tissue>Brain</tissue>
        <tissue>Heart</tissue>
        <tissue>Kidney</tissue>
        <tissue>Lung</tissue>
        <tissue>Testis</tissue>
    </source>
</reference>
<reference evidence="24" key="16">
    <citation type="journal article" date="1999" name="Cell">
        <title>Structure of the enabled/VASP homology 1 domain-peptide complex: a key component in the spatial control of actin assembly.</title>
        <authorList>
            <person name="Prehoda K.E."/>
            <person name="Lee D.J."/>
            <person name="Lim W.A."/>
        </authorList>
    </citation>
    <scope>X-RAY CRYSTALLOGRAPHY (1.8 ANGSTROMS) OF 1-112 IN COMPLEX WITH PRO-RICH PEPTIDE OF L.MONOCYTOGENES ACTA</scope>
</reference>
<reference evidence="25" key="17">
    <citation type="journal article" date="2014" name="Structure">
        <title>Structural details of human tuba recruitment by InlC of Listeria monocytogenes elucidate bacterial cell-cell spreading.</title>
        <authorList>
            <person name="Polle L."/>
            <person name="Rigano L.A."/>
            <person name="Julian R."/>
            <person name="Ireton K."/>
            <person name="Schubert W.D."/>
        </authorList>
    </citation>
    <scope>X-RAY CRYSTALLOGRAPHY (1.97 ANGSTROMS) OF 547-558 IN COMPLEX WITH HUMAN DNMBP</scope>
</reference>
<dbReference type="EMBL" id="D10727">
    <property type="protein sequence ID" value="BAA01570.1"/>
    <property type="status" value="ALT_FRAME"/>
    <property type="molecule type" value="mRNA"/>
</dbReference>
<dbReference type="EMBL" id="U72520">
    <property type="protein sequence ID" value="AAC52863.1"/>
    <property type="molecule type" value="mRNA"/>
</dbReference>
<dbReference type="EMBL" id="U72521">
    <property type="protein sequence ID" value="AAC52864.1"/>
    <property type="molecule type" value="mRNA"/>
</dbReference>
<dbReference type="EMBL" id="U72522">
    <property type="protein sequence ID" value="AAC52865.1"/>
    <property type="molecule type" value="mRNA"/>
</dbReference>
<dbReference type="EMBL" id="U72523">
    <property type="protein sequence ID" value="AAC52866.1"/>
    <property type="molecule type" value="mRNA"/>
</dbReference>
<dbReference type="EMBL" id="BC062927">
    <property type="protein sequence ID" value="AAH62927.1"/>
    <property type="molecule type" value="mRNA"/>
</dbReference>
<dbReference type="CCDS" id="CCDS78764.1">
    <molecule id="Q03173-3"/>
</dbReference>
<dbReference type="PIR" id="S27200">
    <property type="entry name" value="S27200"/>
</dbReference>
<dbReference type="RefSeq" id="NP_001076590.1">
    <molecule id="Q03173-3"/>
    <property type="nucleotide sequence ID" value="NM_001083121.3"/>
</dbReference>
<dbReference type="PDB" id="1EVH">
    <property type="method" value="X-ray"/>
    <property type="resolution" value="1.80 A"/>
    <property type="chains" value="A=1-112"/>
</dbReference>
<dbReference type="PDB" id="4CC3">
    <property type="method" value="X-ray"/>
    <property type="resolution" value="1.97 A"/>
    <property type="chains" value="B/D/F/H=547-558"/>
</dbReference>
<dbReference type="PDBsum" id="1EVH"/>
<dbReference type="PDBsum" id="4CC3"/>
<dbReference type="SMR" id="Q03173"/>
<dbReference type="BioGRID" id="199446">
    <property type="interactions" value="21"/>
</dbReference>
<dbReference type="DIP" id="DIP-29359N"/>
<dbReference type="ELM" id="Q03173"/>
<dbReference type="FunCoup" id="Q03173">
    <property type="interactions" value="1234"/>
</dbReference>
<dbReference type="IntAct" id="Q03173">
    <property type="interactions" value="10"/>
</dbReference>
<dbReference type="MINT" id="Q03173"/>
<dbReference type="STRING" id="10090.ENSMUSP00000077781"/>
<dbReference type="GlyConnect" id="2625">
    <property type="glycosylation" value="1 N-Linked glycan (1 site)"/>
</dbReference>
<dbReference type="GlyCosmos" id="Q03173">
    <property type="glycosylation" value="1 site, 1 glycan"/>
</dbReference>
<dbReference type="GlyGen" id="Q03173">
    <property type="glycosylation" value="10 sites, 1 N-linked glycan (1 site), 1 O-linked glycan (4 sites)"/>
</dbReference>
<dbReference type="iPTMnet" id="Q03173"/>
<dbReference type="PhosphoSitePlus" id="Q03173"/>
<dbReference type="SwissPalm" id="Q03173"/>
<dbReference type="jPOST" id="Q03173"/>
<dbReference type="PaxDb" id="10090-ENSMUSP00000077781"/>
<dbReference type="PeptideAtlas" id="Q03173"/>
<dbReference type="ProteomicsDB" id="277866">
    <molecule id="Q03173-1"/>
</dbReference>
<dbReference type="ProteomicsDB" id="277867">
    <molecule id="Q03173-2"/>
</dbReference>
<dbReference type="ProteomicsDB" id="277868">
    <molecule id="Q03173-3"/>
</dbReference>
<dbReference type="ProteomicsDB" id="277869">
    <molecule id="Q03173-4"/>
</dbReference>
<dbReference type="ProteomicsDB" id="277870">
    <molecule id="Q03173-5"/>
</dbReference>
<dbReference type="ProteomicsDB" id="277871">
    <molecule id="Q03173-6"/>
</dbReference>
<dbReference type="Pumba" id="Q03173"/>
<dbReference type="Antibodypedia" id="34644">
    <property type="antibodies" value="215 antibodies from 33 providers"/>
</dbReference>
<dbReference type="DNASU" id="13800"/>
<dbReference type="Ensembl" id="ENSMUST00000193703.6">
    <molecule id="Q03173-3"/>
    <property type="protein sequence ID" value="ENSMUSP00000141462.2"/>
    <property type="gene ID" value="ENSMUSG00000022995.18"/>
</dbReference>
<dbReference type="GeneID" id="13800"/>
<dbReference type="KEGG" id="mmu:13800"/>
<dbReference type="UCSC" id="uc007dxs.2">
    <molecule id="Q03173-3"/>
    <property type="organism name" value="mouse"/>
</dbReference>
<dbReference type="AGR" id="MGI:108360"/>
<dbReference type="CTD" id="55740"/>
<dbReference type="MGI" id="MGI:108360">
    <property type="gene designation" value="Enah"/>
</dbReference>
<dbReference type="VEuPathDB" id="HostDB:ENSMUSG00000022995"/>
<dbReference type="eggNOG" id="KOG4590">
    <property type="taxonomic scope" value="Eukaryota"/>
</dbReference>
<dbReference type="GeneTree" id="ENSGT00940000157376"/>
<dbReference type="InParanoid" id="Q03173"/>
<dbReference type="OrthoDB" id="31170at2759"/>
<dbReference type="PhylomeDB" id="Q03173"/>
<dbReference type="Reactome" id="R-MMU-376176">
    <property type="pathway name" value="Signaling by ROBO receptors"/>
</dbReference>
<dbReference type="BioGRID-ORCS" id="13800">
    <property type="hits" value="5 hits in 78 CRISPR screens"/>
</dbReference>
<dbReference type="CD-CODE" id="CE726F99">
    <property type="entry name" value="Postsynaptic density"/>
</dbReference>
<dbReference type="ChiTaRS" id="Enah">
    <property type="organism name" value="mouse"/>
</dbReference>
<dbReference type="EvolutionaryTrace" id="Q03173"/>
<dbReference type="PRO" id="PR:Q03173"/>
<dbReference type="Proteomes" id="UP000000589">
    <property type="component" value="Chromosome 1"/>
</dbReference>
<dbReference type="RNAct" id="Q03173">
    <property type="molecule type" value="protein"/>
</dbReference>
<dbReference type="Bgee" id="ENSMUSG00000022995">
    <property type="expression patterns" value="Expressed in vestibular membrane of cochlear duct and 258 other cell types or tissues"/>
</dbReference>
<dbReference type="ExpressionAtlas" id="Q03173">
    <property type="expression patterns" value="baseline and differential"/>
</dbReference>
<dbReference type="GO" id="GO:0015629">
    <property type="term" value="C:actin cytoskeleton"/>
    <property type="evidence" value="ECO:0000304"/>
    <property type="project" value="MGI"/>
</dbReference>
<dbReference type="GO" id="GO:0005829">
    <property type="term" value="C:cytosol"/>
    <property type="evidence" value="ECO:0000304"/>
    <property type="project" value="Reactome"/>
</dbReference>
<dbReference type="GO" id="GO:0030175">
    <property type="term" value="C:filopodium"/>
    <property type="evidence" value="ECO:0000314"/>
    <property type="project" value="MGI"/>
</dbReference>
<dbReference type="GO" id="GO:0005925">
    <property type="term" value="C:focal adhesion"/>
    <property type="evidence" value="ECO:0000314"/>
    <property type="project" value="UniProtKB"/>
</dbReference>
<dbReference type="GO" id="GO:0030027">
    <property type="term" value="C:lamellipodium"/>
    <property type="evidence" value="ECO:0000314"/>
    <property type="project" value="MGI"/>
</dbReference>
<dbReference type="GO" id="GO:0043005">
    <property type="term" value="C:neuron projection"/>
    <property type="evidence" value="ECO:0000314"/>
    <property type="project" value="MGI"/>
</dbReference>
<dbReference type="GO" id="GO:0001725">
    <property type="term" value="C:stress fiber"/>
    <property type="evidence" value="ECO:0000314"/>
    <property type="project" value="MGI"/>
</dbReference>
<dbReference type="GO" id="GO:0045202">
    <property type="term" value="C:synapse"/>
    <property type="evidence" value="ECO:0007669"/>
    <property type="project" value="UniProtKB-SubCell"/>
</dbReference>
<dbReference type="GO" id="GO:0003779">
    <property type="term" value="F:actin binding"/>
    <property type="evidence" value="ECO:0007669"/>
    <property type="project" value="UniProtKB-KW"/>
</dbReference>
<dbReference type="GO" id="GO:0005522">
    <property type="term" value="F:profilin binding"/>
    <property type="evidence" value="ECO:0000314"/>
    <property type="project" value="UniProtKB"/>
</dbReference>
<dbReference type="GO" id="GO:0017124">
    <property type="term" value="F:SH3 domain binding"/>
    <property type="evidence" value="ECO:0000314"/>
    <property type="project" value="MGI"/>
</dbReference>
<dbReference type="GO" id="GO:0030036">
    <property type="term" value="P:actin cytoskeleton organization"/>
    <property type="evidence" value="ECO:0000316"/>
    <property type="project" value="MGI"/>
</dbReference>
<dbReference type="GO" id="GO:0007015">
    <property type="term" value="P:actin filament organization"/>
    <property type="evidence" value="ECO:0000314"/>
    <property type="project" value="UniProtKB"/>
</dbReference>
<dbReference type="GO" id="GO:0008154">
    <property type="term" value="P:actin polymerization or depolymerization"/>
    <property type="evidence" value="ECO:0000314"/>
    <property type="project" value="MGI"/>
</dbReference>
<dbReference type="GO" id="GO:0070358">
    <property type="term" value="P:actin polymerization-dependent cell motility"/>
    <property type="evidence" value="ECO:0000314"/>
    <property type="project" value="UniProtKB"/>
</dbReference>
<dbReference type="GO" id="GO:0007411">
    <property type="term" value="P:axon guidance"/>
    <property type="evidence" value="ECO:0000315"/>
    <property type="project" value="MGI"/>
</dbReference>
<dbReference type="GO" id="GO:1990830">
    <property type="term" value="P:cellular response to leukemia inhibitory factor"/>
    <property type="evidence" value="ECO:0000270"/>
    <property type="project" value="MGI"/>
</dbReference>
<dbReference type="GO" id="GO:0001843">
    <property type="term" value="P:neural tube closure"/>
    <property type="evidence" value="ECO:0000316"/>
    <property type="project" value="MGI"/>
</dbReference>
<dbReference type="CDD" id="cd01207">
    <property type="entry name" value="EVH1_Ena_VASP-like"/>
    <property type="match status" value="1"/>
</dbReference>
<dbReference type="CDD" id="cd22185">
    <property type="entry name" value="WH2_hVASP-like"/>
    <property type="match status" value="1"/>
</dbReference>
<dbReference type="FunFam" id="1.20.5.1160:FF:000003">
    <property type="entry name" value="protein enabled homolog isoform X2"/>
    <property type="match status" value="1"/>
</dbReference>
<dbReference type="FunFam" id="2.30.29.30:FF:000047">
    <property type="entry name" value="vasodilator-stimulated phosphoprotein isoform X2"/>
    <property type="match status" value="1"/>
</dbReference>
<dbReference type="Gene3D" id="2.30.29.30">
    <property type="entry name" value="Pleckstrin-homology domain (PH domain)/Phosphotyrosine-binding domain (PTB)"/>
    <property type="match status" value="1"/>
</dbReference>
<dbReference type="Gene3D" id="1.20.5.1160">
    <property type="entry name" value="Vasodilator-stimulated phosphoprotein"/>
    <property type="match status" value="1"/>
</dbReference>
<dbReference type="InterPro" id="IPR011993">
    <property type="entry name" value="PH-like_dom_sf"/>
</dbReference>
<dbReference type="InterPro" id="IPR038023">
    <property type="entry name" value="VASP_sf"/>
</dbReference>
<dbReference type="InterPro" id="IPR014885">
    <property type="entry name" value="VASP_tetra"/>
</dbReference>
<dbReference type="InterPro" id="IPR000697">
    <property type="entry name" value="WH1/EVH1_dom"/>
</dbReference>
<dbReference type="PANTHER" id="PTHR11202:SF1">
    <property type="entry name" value="PROTEIN ENABLED HOMOLOG"/>
    <property type="match status" value="1"/>
</dbReference>
<dbReference type="PANTHER" id="PTHR11202">
    <property type="entry name" value="SPROUTY-RELATED, EVH1 DOMAIN-CONTAINING PROTEIN FAMILY MEMBER"/>
    <property type="match status" value="1"/>
</dbReference>
<dbReference type="Pfam" id="PF08776">
    <property type="entry name" value="VASP_tetra"/>
    <property type="match status" value="1"/>
</dbReference>
<dbReference type="Pfam" id="PF00568">
    <property type="entry name" value="WH1"/>
    <property type="match status" value="1"/>
</dbReference>
<dbReference type="PRINTS" id="PR01217">
    <property type="entry name" value="PRICHEXTENSN"/>
</dbReference>
<dbReference type="SMART" id="SM00461">
    <property type="entry name" value="WH1"/>
    <property type="match status" value="1"/>
</dbReference>
<dbReference type="SUPFAM" id="SSF50729">
    <property type="entry name" value="PH domain-like"/>
    <property type="match status" value="1"/>
</dbReference>
<dbReference type="SUPFAM" id="SSF118370">
    <property type="entry name" value="Vasodilator-stimulated phosphoprotein, VASP, tetramerisation domain"/>
    <property type="match status" value="1"/>
</dbReference>
<dbReference type="PROSITE" id="PS50229">
    <property type="entry name" value="WH1"/>
    <property type="match status" value="1"/>
</dbReference>
<comment type="function">
    <text evidence="6 8 13 16">Ena/VASP proteins are actin-associated proteins involved in a range of processes dependent on cytoskeleton remodeling and cell polarity such as axon guidance and lamellipodial and filopodial dynamics in migrating cells. ENAH induces the formation of F-actin rich outgrowths in fibroblasts. Acts synergistically with BAIAP2-alpha and downstream of NTN1 to promote filipodia formation.</text>
</comment>
<comment type="subunit">
    <text evidence="1 7 9 10 12 14 15 16 17 18 23">Homotetramer (By similarity). Interacts with APBB1IP, APBB1, PFN1 and ROBO4. Isoforms, containing the polyproline-rich regions with PPLP motifs, bind the WW domain of APBB1IP. Isoforms, containing the PPSY motif, bind, in vitro, to the WW2 and WW3 domains of NEDD4 and to the WW1 domain of YAP1. Binds the SH3 domain of BAIAP2-alpha but only after the autoinhibitory region of BAIAP2-alpha has been blocked by interaction with CDC42. Interacts, via the EVH1/WH1 domain, with the Pro-rich domains from VCL, ZYX and Listeria monocytogenes actA and with TES (via LIM domain). The TES LIM domain and the Pro-rich domains from VCL or ZYX compete for the same binding site. Interaction with ZYX is important for targeting ENAH to focal adhesions and enhances production of actin-rich structures at the apical surface of cells. Binds GPHN. Heterotrimer with TES and ACTL7A (By similarity). Interacts with FAT1 (via EVH1 domains) (PubMed:15148305). Interacts, through the Pro-rich region, with the C-terminal SH3 domain of DNMPB (Probable) (PubMed:14506234). Interacts with PRPF40A (PubMed:9171351).</text>
</comment>
<comment type="interaction">
    <interactant intactId="EBI-6083294">
        <id>Q03173</id>
    </interactant>
    <interactant intactId="EBI-525456">
        <id>Q9UQB8</id>
        <label>BAIAP2</label>
    </interactant>
    <organismsDiffer>true</organismsDiffer>
    <experiments>3</experiments>
</comment>
<comment type="interaction">
    <interactant intactId="EBI-16085647">
        <id>Q03173-1</id>
    </interactant>
    <interactant intactId="EBI-16085546">
        <id>Q6XZF7-1</id>
        <label>DNMBP</label>
    </interactant>
    <organismsDiffer>true</organismsDiffer>
    <experiments>2</experiments>
</comment>
<comment type="subcellular location">
    <subcellularLocation>
        <location evidence="6 8 16">Cytoplasm</location>
    </subcellularLocation>
    <subcellularLocation>
        <location evidence="1">Cytoplasm</location>
        <location evidence="1">Cytoskeleton</location>
    </subcellularLocation>
    <subcellularLocation>
        <location evidence="1">Cell projection</location>
        <location evidence="1">Lamellipodium</location>
    </subcellularLocation>
    <subcellularLocation>
        <location evidence="1">Cell projection</location>
        <location evidence="1">Filopodium</location>
    </subcellularLocation>
    <subcellularLocation>
        <location evidence="1">Synapse</location>
    </subcellularLocation>
    <subcellularLocation>
        <location evidence="1">Cell junction</location>
        <location evidence="1">Focal adhesion</location>
    </subcellularLocation>
    <text evidence="1">Targeted to the leading edge of lamellipodia and filopodia by MRL family members. Colocalizes at filopodial tips with a number of other proteins including vinculin and zyxlin. Colocalizes with N-WASP at the leading edge. Colocalizes with GPHN and PFN at synapses (By similarity).</text>
</comment>
<comment type="alternative products">
    <event type="alternative splicing"/>
    <isoform>
        <id>Q03173-1</id>
        <name>5</name>
        <name>Neural variant Mena+++</name>
        <name>140 kDa isoform</name>
        <sequence type="displayed"/>
    </isoform>
    <isoform>
        <id>Q03173-2</id>
        <name>1</name>
        <sequence type="described" ref="VSP_007255"/>
    </isoform>
    <isoform>
        <id>Q03173-3</id>
        <name>2</name>
        <name>Mena</name>
        <name>80 kDa isoform</name>
        <sequence type="described" ref="VSP_007259 VSP_007260"/>
    </isoform>
    <isoform>
        <id>Q03173-4</id>
        <name>3</name>
        <name>Neural variant Mena+</name>
        <sequence type="described" ref="VSP_007259"/>
    </isoform>
    <isoform>
        <id>Q03173-5</id>
        <name>4</name>
        <name>Neural variant Mena++</name>
        <sequence type="described" ref="VSP_007257 VSP_007258"/>
    </isoform>
    <isoform>
        <id>Q03173-6</id>
        <name>6</name>
        <name>Mena(S)</name>
        <sequence type="described" ref="VSP_007259 VSP_007260 VSP_010565"/>
    </isoform>
</comment>
<comment type="tissue specificity">
    <text evidence="6 11 16">Expressed in heart and testis, lower levels in lung, skeletal muscle, kidney, pancreas and brain. Isoform 5 is expressed exclusively in the brain. Isoform 2 is expressed predominantly in brain, testis, ovary and fat. In the brain, isoforms 2 and 5 are expressed at highest levels in the hippocampus, cortex and midbrain, and at lowest levels in the striatum and cerebellum. Isoform 6 is expressed in brain and spleen.</text>
</comment>
<comment type="developmental stage">
    <text evidence="6">At 8.5 dpc, particularly enriched in the neuroepithelium, the forebrain and the somites. Highly expressed in the edges of the neural folds. By 10.5 dpc, detected in the brain, dorsal root ganglia (DRG), somites and limb buds. Highly expressed in the branchial and pharyngeal arches, neural crest-derived structures that give rise to portions of the face and neck. At 11 dpc, isoform 2, isoform 3 and isoform 5 are expressed in embryonic brain (at protein level). Expression of isoform 3 decreases steadily and becomes almost undetectable by 16 dpc, while expression of isoform 5 begins to increase from 13 dpc and peaks between 16 and 18 dpc (at protein level).</text>
</comment>
<comment type="domain">
    <text>The EVH2 domain is comprised of 3 regions. Block A is a thymosin-like domain required for G-actin binding. The KLKR motif within this block is essential for the G-actin binding and for actin polymerization. Block B is required for F-actin binding and subcellular location, and Block C for tetramerization.</text>
</comment>
<comment type="PTM">
    <text evidence="9 13">NTN1-induced PKA phosphorylation on Ser-255 directly parallels the formation of filopodial protrusions.</text>
</comment>
<comment type="disruption phenotype">
    <text evidence="6">Mutant animals are viable and recovered in the appropriate Mendelian ratios. they are smaller than their littermates until adulthood and exhibit abnormal cage behavior, including reduced activity.</text>
</comment>
<comment type="miscellaneous">
    <text>Required to transform actin polymerization into active movement for the propulsive force of Listeria monocytogenes.</text>
</comment>
<comment type="miscellaneous">
    <molecule>Isoform 3</molecule>
    <text evidence="22">Phosphorylated during neural development.</text>
</comment>
<comment type="similarity">
    <text evidence="22">Belongs to the Ena/VASP family.</text>
</comment>
<comment type="sequence caution" evidence="22">
    <conflict type="frameshift">
        <sequence resource="EMBL-CDS" id="BAA01570"/>
    </conflict>
</comment>
<comment type="sequence caution" evidence="22">
    <molecule>Isoform 1</molecule>
    <conflict type="frameshift">
        <sequence resource="EMBL-CDS" id="BAA01570"/>
    </conflict>
</comment>
<accession>Q03173</accession>
<accession>P70430</accession>
<accession>P70431</accession>
<accession>P70432</accession>
<accession>P70433</accession>
<accession>Q5D053</accession>
<proteinExistence type="evidence at protein level"/>
<keyword id="KW-0002">3D-structure</keyword>
<keyword id="KW-0009">Actin-binding</keyword>
<keyword id="KW-0025">Alternative splicing</keyword>
<keyword id="KW-0965">Cell junction</keyword>
<keyword id="KW-0966">Cell projection</keyword>
<keyword id="KW-0175">Coiled coil</keyword>
<keyword id="KW-0963">Cytoplasm</keyword>
<keyword id="KW-0206">Cytoskeleton</keyword>
<keyword id="KW-0217">Developmental protein</keyword>
<keyword id="KW-0221">Differentiation</keyword>
<keyword id="KW-0524">Neurogenesis</keyword>
<keyword id="KW-0597">Phosphoprotein</keyword>
<keyword id="KW-1185">Reference proteome</keyword>
<keyword id="KW-0677">Repeat</keyword>
<keyword id="KW-0729">SH3-binding</keyword>
<keyword id="KW-0770">Synapse</keyword>
<sequence>MSEQSICQARAAVMVYDDANKKWVPAGGSTGFSRVHIYHHTGNNTFRVVGRKIQDHQVVINCAIPKGLKYNQATQTFHQWRDARQVYGLNFGSKEDANVFASAMMHALEVLNSQEAAQSKVTATQDSTNLRCIFCGPTLPRQNSQLPAQVQNGPSQEELEIQRRQLQEQQRQKELERERMERERLERERLERERLERERLEQEQLERQRQEREHVERLERERLERLERERQERERERLEQLEREQVEWERERRMSNAAPSSDSSLSSAPLPEYSSCQPPSAPPPSYAKVISAPVSDATPDYAVVTALPPTSTPPTPPLRHAATRFATSLGSAFHPVLPHYATVPRPLNKNSRPSSPVNTPSSQPPAAKSCAWPTSNFSPLPPSPPIMISSPPGKATGPRPVLPVCVSSPVPQMPPSPTAPNGSLDSVTYPVSPPPTSGPAAPPPPPPPPPPPPPPPLPPPPLPPLASLSHCGSQASPPPGTPLASTPSSKPSVLPSPSAGAPASAETPLNPELGDSSASEPGLQAASQPAESPTPQGLVLGPPAPPPPPPLPSGPAYASALPPPPGPPPPPPLPSTGPPPPPPPPPPLPNQAPPPPPPPPAPPLPASGIFSGSTSEDNRPLTGLAAAIAGAKLRKVSRVEDGSFPGGGNTGSVSLASSKADAGRGNGPLPLGGSGLMEEMSALLARRRRIAEKGSTIETEQKEDRNEDAEPITAKAPSTSTPEPTRKPWERTNTMNGSKSPVISRPKSTPSSQPSANGVQTEGLDYDRLKQDILDEMRKELAKLKEELIDAIRQELSKSNTA</sequence>